<accession>Q02758</accession>
<organism>
    <name type="scientific">Pisum sativum</name>
    <name type="common">Garden pea</name>
    <name type="synonym">Lathyrus oleraceus</name>
    <dbReference type="NCBI Taxonomy" id="3888"/>
    <lineage>
        <taxon>Eukaryota</taxon>
        <taxon>Viridiplantae</taxon>
        <taxon>Streptophyta</taxon>
        <taxon>Embryophyta</taxon>
        <taxon>Tracheophyta</taxon>
        <taxon>Spermatophyta</taxon>
        <taxon>Magnoliopsida</taxon>
        <taxon>eudicotyledons</taxon>
        <taxon>Gunneridae</taxon>
        <taxon>Pentapetalae</taxon>
        <taxon>rosids</taxon>
        <taxon>fabids</taxon>
        <taxon>Fabales</taxon>
        <taxon>Fabaceae</taxon>
        <taxon>Papilionoideae</taxon>
        <taxon>50 kb inversion clade</taxon>
        <taxon>NPAAA clade</taxon>
        <taxon>Hologalegina</taxon>
        <taxon>IRL clade</taxon>
        <taxon>Fabeae</taxon>
        <taxon>Pisum</taxon>
    </lineage>
</organism>
<dbReference type="EMBL" id="M94558">
    <property type="protein sequence ID" value="AAA33647.1"/>
    <property type="molecule type" value="mRNA"/>
</dbReference>
<dbReference type="PIR" id="S28171">
    <property type="entry name" value="S28171"/>
</dbReference>
<dbReference type="SMR" id="Q02758"/>
<dbReference type="GO" id="GO:0009535">
    <property type="term" value="C:chloroplast thylakoid membrane"/>
    <property type="evidence" value="ECO:0007669"/>
    <property type="project" value="UniProtKB-SubCell"/>
</dbReference>
<dbReference type="GO" id="GO:0045259">
    <property type="term" value="C:proton-transporting ATP synthase complex"/>
    <property type="evidence" value="ECO:0007669"/>
    <property type="project" value="UniProtKB-KW"/>
</dbReference>
<dbReference type="GO" id="GO:0046933">
    <property type="term" value="F:proton-transporting ATP synthase activity, rotational mechanism"/>
    <property type="evidence" value="ECO:0007669"/>
    <property type="project" value="InterPro"/>
</dbReference>
<dbReference type="Gene3D" id="1.10.520.20">
    <property type="entry name" value="N-terminal domain of the delta subunit of the F1F0-ATP synthase"/>
    <property type="match status" value="1"/>
</dbReference>
<dbReference type="HAMAP" id="MF_01416">
    <property type="entry name" value="ATP_synth_delta_bact"/>
    <property type="match status" value="1"/>
</dbReference>
<dbReference type="InterPro" id="IPR026015">
    <property type="entry name" value="ATP_synth_OSCP/delta_N_sf"/>
</dbReference>
<dbReference type="InterPro" id="IPR020781">
    <property type="entry name" value="ATPase_OSCP/d_CS"/>
</dbReference>
<dbReference type="InterPro" id="IPR000711">
    <property type="entry name" value="ATPase_OSCP/dsu"/>
</dbReference>
<dbReference type="NCBIfam" id="TIGR01145">
    <property type="entry name" value="ATP_synt_delta"/>
    <property type="match status" value="1"/>
</dbReference>
<dbReference type="PANTHER" id="PTHR11910">
    <property type="entry name" value="ATP SYNTHASE DELTA CHAIN"/>
    <property type="match status" value="1"/>
</dbReference>
<dbReference type="Pfam" id="PF00213">
    <property type="entry name" value="OSCP"/>
    <property type="match status" value="1"/>
</dbReference>
<dbReference type="PRINTS" id="PR00125">
    <property type="entry name" value="ATPASEDELTA"/>
</dbReference>
<dbReference type="SUPFAM" id="SSF47928">
    <property type="entry name" value="N-terminal domain of the delta subunit of the F1F0-ATP synthase"/>
    <property type="match status" value="1"/>
</dbReference>
<dbReference type="PROSITE" id="PS00389">
    <property type="entry name" value="ATPASE_DELTA"/>
    <property type="match status" value="1"/>
</dbReference>
<sequence length="251" mass="27624">MASLQHTTASLHSKHIPKTTNILTRKPILNLSSSTFYSPKLKLKLKLPLTKTRRSTGGALGARMSSLAAGSYAAALADLANSNNTLDAITADFDKIEQLFSDPKVFDYFSSPIVEDSTKRQLIGEFATTSGFQPHTHNFLNVLIDSKRIDMIIDIIKEFEFVYNTLTDTELVVVTSVVKLESHHLAQIAKQVQKLTGAKKVRTKTLLDPSLVAGFTVRYGNTGSKFIDMSVKRKLEEIAAQIDLGDIQLAV</sequence>
<evidence type="ECO:0000269" key="1">
    <source>
    </source>
</evidence>
<evidence type="ECO:0000305" key="2"/>
<proteinExistence type="evidence at protein level"/>
<keyword id="KW-0066">ATP synthesis</keyword>
<keyword id="KW-0139">CF(1)</keyword>
<keyword id="KW-0150">Chloroplast</keyword>
<keyword id="KW-0903">Direct protein sequencing</keyword>
<keyword id="KW-0375">Hydrogen ion transport</keyword>
<keyword id="KW-0406">Ion transport</keyword>
<keyword id="KW-0472">Membrane</keyword>
<keyword id="KW-0934">Plastid</keyword>
<keyword id="KW-0793">Thylakoid</keyword>
<keyword id="KW-0809">Transit peptide</keyword>
<keyword id="KW-0813">Transport</keyword>
<comment type="function">
    <text>This protein seems to be part of the stalk that links CF(0) to CF(1). It either transmits conformational changes from CF(0) into CF(1) or is implicated in proton conduction.</text>
</comment>
<comment type="subunit">
    <text>F-type ATPases have 2 components, CF(1) - the catalytic core - and CF(0) - the membrane proton channel. CF(1) has five subunits: alpha(3), beta(3), gamma(1), delta(1), epsilon(1). CF(0) has three main subunits: a, b and c.</text>
</comment>
<comment type="subcellular location">
    <subcellularLocation>
        <location>Plastid</location>
        <location>Chloroplast thylakoid membrane</location>
    </subcellularLocation>
</comment>
<comment type="similarity">
    <text evidence="2">Belongs to the ATPase delta chain family.</text>
</comment>
<reference key="1">
    <citation type="journal article" date="1992" name="Biochim. Biophys. Acta">
        <title>Cloning and sequencing of a cDNA for the delta-subunit of photosynthetic ATP-synthase (EC 3.6.3.14) from pea (Pisum sativum).</title>
        <authorList>
            <person name="Hoesche J.A."/>
            <person name="Berzborn R.J."/>
        </authorList>
    </citation>
    <scope>NUCLEOTIDE SEQUENCE [MRNA]</scope>
    <scope>PROTEIN SEQUENCE OF 65-251</scope>
</reference>
<gene>
    <name type="primary">ATPD</name>
</gene>
<feature type="transit peptide" description="Chloroplast" evidence="1">
    <location>
        <begin position="1"/>
        <end position="64"/>
    </location>
</feature>
<feature type="chain" id="PRO_0000002639" description="ATP synthase delta chain, chloroplastic">
    <location>
        <begin position="65"/>
        <end position="251"/>
    </location>
</feature>
<protein>
    <recommendedName>
        <fullName>ATP synthase delta chain, chloroplastic</fullName>
    </recommendedName>
    <alternativeName>
        <fullName>F-ATPase delta chain</fullName>
    </alternativeName>
</protein>
<name>ATPD_PEA</name>